<name>SYM_SALPK</name>
<proteinExistence type="inferred from homology"/>
<protein>
    <recommendedName>
        <fullName evidence="1">Methionine--tRNA ligase</fullName>
        <ecNumber evidence="1">6.1.1.10</ecNumber>
    </recommendedName>
    <alternativeName>
        <fullName evidence="1">Methionyl-tRNA synthetase</fullName>
        <shortName evidence="1">MetRS</shortName>
    </alternativeName>
</protein>
<feature type="chain" id="PRO_1000093731" description="Methionine--tRNA ligase">
    <location>
        <begin position="1"/>
        <end position="677"/>
    </location>
</feature>
<feature type="domain" description="tRNA-binding" evidence="1">
    <location>
        <begin position="575"/>
        <end position="677"/>
    </location>
</feature>
<feature type="short sequence motif" description="'HIGH' region">
    <location>
        <begin position="15"/>
        <end position="25"/>
    </location>
</feature>
<feature type="short sequence motif" description="'KMSKS' region">
    <location>
        <begin position="333"/>
        <end position="337"/>
    </location>
</feature>
<feature type="binding site" evidence="1">
    <location>
        <position position="146"/>
    </location>
    <ligand>
        <name>Zn(2+)</name>
        <dbReference type="ChEBI" id="CHEBI:29105"/>
    </ligand>
</feature>
<feature type="binding site" evidence="1">
    <location>
        <position position="149"/>
    </location>
    <ligand>
        <name>Zn(2+)</name>
        <dbReference type="ChEBI" id="CHEBI:29105"/>
    </ligand>
</feature>
<feature type="binding site" evidence="1">
    <location>
        <position position="159"/>
    </location>
    <ligand>
        <name>Zn(2+)</name>
        <dbReference type="ChEBI" id="CHEBI:29105"/>
    </ligand>
</feature>
<feature type="binding site" evidence="1">
    <location>
        <position position="162"/>
    </location>
    <ligand>
        <name>Zn(2+)</name>
        <dbReference type="ChEBI" id="CHEBI:29105"/>
    </ligand>
</feature>
<feature type="binding site" evidence="1">
    <location>
        <position position="336"/>
    </location>
    <ligand>
        <name>ATP</name>
        <dbReference type="ChEBI" id="CHEBI:30616"/>
    </ligand>
</feature>
<accession>B5BE81</accession>
<dbReference type="EC" id="6.1.1.10" evidence="1"/>
<dbReference type="EMBL" id="FM200053">
    <property type="protein sequence ID" value="CAR58787.1"/>
    <property type="molecule type" value="Genomic_DNA"/>
</dbReference>
<dbReference type="RefSeq" id="WP_000195335.1">
    <property type="nucleotide sequence ID" value="NC_011147.1"/>
</dbReference>
<dbReference type="SMR" id="B5BE81"/>
<dbReference type="KEGG" id="sek:SSPA0656"/>
<dbReference type="HOGENOM" id="CLU_009710_7_0_6"/>
<dbReference type="Proteomes" id="UP000001869">
    <property type="component" value="Chromosome"/>
</dbReference>
<dbReference type="GO" id="GO:0005829">
    <property type="term" value="C:cytosol"/>
    <property type="evidence" value="ECO:0007669"/>
    <property type="project" value="TreeGrafter"/>
</dbReference>
<dbReference type="GO" id="GO:0005524">
    <property type="term" value="F:ATP binding"/>
    <property type="evidence" value="ECO:0007669"/>
    <property type="project" value="UniProtKB-UniRule"/>
</dbReference>
<dbReference type="GO" id="GO:0046872">
    <property type="term" value="F:metal ion binding"/>
    <property type="evidence" value="ECO:0007669"/>
    <property type="project" value="UniProtKB-KW"/>
</dbReference>
<dbReference type="GO" id="GO:0004825">
    <property type="term" value="F:methionine-tRNA ligase activity"/>
    <property type="evidence" value="ECO:0007669"/>
    <property type="project" value="UniProtKB-UniRule"/>
</dbReference>
<dbReference type="GO" id="GO:0000049">
    <property type="term" value="F:tRNA binding"/>
    <property type="evidence" value="ECO:0007669"/>
    <property type="project" value="UniProtKB-KW"/>
</dbReference>
<dbReference type="GO" id="GO:0006431">
    <property type="term" value="P:methionyl-tRNA aminoacylation"/>
    <property type="evidence" value="ECO:0007669"/>
    <property type="project" value="UniProtKB-UniRule"/>
</dbReference>
<dbReference type="CDD" id="cd07957">
    <property type="entry name" value="Anticodon_Ia_Met"/>
    <property type="match status" value="1"/>
</dbReference>
<dbReference type="CDD" id="cd00814">
    <property type="entry name" value="MetRS_core"/>
    <property type="match status" value="1"/>
</dbReference>
<dbReference type="CDD" id="cd02800">
    <property type="entry name" value="tRNA_bind_EcMetRS_like"/>
    <property type="match status" value="1"/>
</dbReference>
<dbReference type="FunFam" id="1.10.730.10:FF:000005">
    <property type="entry name" value="Methionine--tRNA ligase"/>
    <property type="match status" value="1"/>
</dbReference>
<dbReference type="FunFam" id="2.20.28.20:FF:000001">
    <property type="entry name" value="Methionine--tRNA ligase"/>
    <property type="match status" value="1"/>
</dbReference>
<dbReference type="FunFam" id="2.40.50.140:FF:000042">
    <property type="entry name" value="Methionine--tRNA ligase"/>
    <property type="match status" value="1"/>
</dbReference>
<dbReference type="Gene3D" id="3.40.50.620">
    <property type="entry name" value="HUPs"/>
    <property type="match status" value="1"/>
</dbReference>
<dbReference type="Gene3D" id="1.10.730.10">
    <property type="entry name" value="Isoleucyl-tRNA Synthetase, Domain 1"/>
    <property type="match status" value="1"/>
</dbReference>
<dbReference type="Gene3D" id="2.20.28.20">
    <property type="entry name" value="Methionyl-tRNA synthetase, Zn-domain"/>
    <property type="match status" value="1"/>
</dbReference>
<dbReference type="Gene3D" id="2.40.50.140">
    <property type="entry name" value="Nucleic acid-binding proteins"/>
    <property type="match status" value="1"/>
</dbReference>
<dbReference type="HAMAP" id="MF_00098">
    <property type="entry name" value="Met_tRNA_synth_type1"/>
    <property type="match status" value="1"/>
</dbReference>
<dbReference type="InterPro" id="IPR001412">
    <property type="entry name" value="aa-tRNA-synth_I_CS"/>
</dbReference>
<dbReference type="InterPro" id="IPR041872">
    <property type="entry name" value="Anticodon_Met"/>
</dbReference>
<dbReference type="InterPro" id="IPR004495">
    <property type="entry name" value="Met-tRNA-synth_bsu_C"/>
</dbReference>
<dbReference type="InterPro" id="IPR023458">
    <property type="entry name" value="Met-tRNA_ligase_1"/>
</dbReference>
<dbReference type="InterPro" id="IPR014758">
    <property type="entry name" value="Met-tRNA_synth"/>
</dbReference>
<dbReference type="InterPro" id="IPR015413">
    <property type="entry name" value="Methionyl/Leucyl_tRNA_Synth"/>
</dbReference>
<dbReference type="InterPro" id="IPR033911">
    <property type="entry name" value="MetRS_core"/>
</dbReference>
<dbReference type="InterPro" id="IPR029038">
    <property type="entry name" value="MetRS_Zn"/>
</dbReference>
<dbReference type="InterPro" id="IPR012340">
    <property type="entry name" value="NA-bd_OB-fold"/>
</dbReference>
<dbReference type="InterPro" id="IPR014729">
    <property type="entry name" value="Rossmann-like_a/b/a_fold"/>
</dbReference>
<dbReference type="InterPro" id="IPR002547">
    <property type="entry name" value="tRNA-bd_dom"/>
</dbReference>
<dbReference type="InterPro" id="IPR009080">
    <property type="entry name" value="tRNAsynth_Ia_anticodon-bd"/>
</dbReference>
<dbReference type="NCBIfam" id="TIGR00398">
    <property type="entry name" value="metG"/>
    <property type="match status" value="1"/>
</dbReference>
<dbReference type="NCBIfam" id="TIGR00399">
    <property type="entry name" value="metG_C_term"/>
    <property type="match status" value="1"/>
</dbReference>
<dbReference type="NCBIfam" id="NF001100">
    <property type="entry name" value="PRK00133.1"/>
    <property type="match status" value="1"/>
</dbReference>
<dbReference type="PANTHER" id="PTHR45765">
    <property type="entry name" value="METHIONINE--TRNA LIGASE"/>
    <property type="match status" value="1"/>
</dbReference>
<dbReference type="PANTHER" id="PTHR45765:SF1">
    <property type="entry name" value="METHIONINE--TRNA LIGASE, CYTOPLASMIC"/>
    <property type="match status" value="1"/>
</dbReference>
<dbReference type="Pfam" id="PF19303">
    <property type="entry name" value="Anticodon_3"/>
    <property type="match status" value="1"/>
</dbReference>
<dbReference type="Pfam" id="PF09334">
    <property type="entry name" value="tRNA-synt_1g"/>
    <property type="match status" value="1"/>
</dbReference>
<dbReference type="Pfam" id="PF01588">
    <property type="entry name" value="tRNA_bind"/>
    <property type="match status" value="1"/>
</dbReference>
<dbReference type="PRINTS" id="PR01041">
    <property type="entry name" value="TRNASYNTHMET"/>
</dbReference>
<dbReference type="SUPFAM" id="SSF47323">
    <property type="entry name" value="Anticodon-binding domain of a subclass of class I aminoacyl-tRNA synthetases"/>
    <property type="match status" value="1"/>
</dbReference>
<dbReference type="SUPFAM" id="SSF57770">
    <property type="entry name" value="Methionyl-tRNA synthetase (MetRS), Zn-domain"/>
    <property type="match status" value="1"/>
</dbReference>
<dbReference type="SUPFAM" id="SSF50249">
    <property type="entry name" value="Nucleic acid-binding proteins"/>
    <property type="match status" value="1"/>
</dbReference>
<dbReference type="SUPFAM" id="SSF52374">
    <property type="entry name" value="Nucleotidylyl transferase"/>
    <property type="match status" value="1"/>
</dbReference>
<dbReference type="PROSITE" id="PS00178">
    <property type="entry name" value="AA_TRNA_LIGASE_I"/>
    <property type="match status" value="1"/>
</dbReference>
<dbReference type="PROSITE" id="PS50886">
    <property type="entry name" value="TRBD"/>
    <property type="match status" value="1"/>
</dbReference>
<comment type="function">
    <text evidence="1">Is required not only for elongation of protein synthesis but also for the initiation of all mRNA translation through initiator tRNA(fMet) aminoacylation.</text>
</comment>
<comment type="catalytic activity">
    <reaction evidence="1">
        <text>tRNA(Met) + L-methionine + ATP = L-methionyl-tRNA(Met) + AMP + diphosphate</text>
        <dbReference type="Rhea" id="RHEA:13481"/>
        <dbReference type="Rhea" id="RHEA-COMP:9667"/>
        <dbReference type="Rhea" id="RHEA-COMP:9698"/>
        <dbReference type="ChEBI" id="CHEBI:30616"/>
        <dbReference type="ChEBI" id="CHEBI:33019"/>
        <dbReference type="ChEBI" id="CHEBI:57844"/>
        <dbReference type="ChEBI" id="CHEBI:78442"/>
        <dbReference type="ChEBI" id="CHEBI:78530"/>
        <dbReference type="ChEBI" id="CHEBI:456215"/>
        <dbReference type="EC" id="6.1.1.10"/>
    </reaction>
</comment>
<comment type="cofactor">
    <cofactor evidence="1">
        <name>Zn(2+)</name>
        <dbReference type="ChEBI" id="CHEBI:29105"/>
    </cofactor>
    <text evidence="1">Binds 1 zinc ion per subunit.</text>
</comment>
<comment type="subunit">
    <text evidence="1">Homodimer.</text>
</comment>
<comment type="subcellular location">
    <subcellularLocation>
        <location evidence="1">Cytoplasm</location>
    </subcellularLocation>
</comment>
<comment type="similarity">
    <text evidence="1">Belongs to the class-I aminoacyl-tRNA synthetase family. MetG type 1 subfamily.</text>
</comment>
<evidence type="ECO:0000255" key="1">
    <source>
        <dbReference type="HAMAP-Rule" id="MF_00098"/>
    </source>
</evidence>
<sequence>MTQVAKKILVTCALPYANGSIHLGHMLEHIQADVWVRYQRMRGHEVNFICADDAHGTPIMLKAQQLGITPEQMIGEMSQEHQTDFAGFNISYDNYHSTHSDENRELSELIYTRLKENGFIKNRTISQLYDPEKGMFLPDRFVKGTCPKCKSADQYGDNCEVCGATYSPTELIEPKSVVSGATPVMRDSEHFFFDLPSFSEMLQAWTRSGALQEQVANKMQEWFESGLQQWDISRDAPYFGFEIPNAPGKYFYVWLDAPIGYMGSFKNLCDKRGDTTSFDEYWKKDSDAELYHFIGKDIVYFHSLFWPAMLEGSHFRKPTNLFVHGYVTVNGAKMSKSRGTFIKASTWLKHFDADSLRYYYTAKLSSRIDDIDLNLEDFVQRVNADIVNKVVNLASRNAGFINKRFDGVLAAELADPQLYKTFTDAAAVIGEAWESREFGKAIREIMALADVANRYVDEQAPWVVAKQEGRDADLQAICSMGINLFRVLMTYLKPVLPTLSERVEAFLNSELNWDAIEQPLLGHKVNTFKALYNRIDMKQVEALVEASKEEVKAAAAPVTGPLADFPIQETITFDDFAKIDLRVALIENAEFVEGSDKLLRLTLDLGGEKRNVFSGIRSAYPDPQALIGRQTVMVANLAPRKMRFGVSEGMVMAAGPGGKDIFLLSPDDGAKPGQQVK</sequence>
<gene>
    <name evidence="1" type="primary">metG</name>
    <name type="ordered locus">SSPA0656</name>
</gene>
<organism>
    <name type="scientific">Salmonella paratyphi A (strain AKU_12601)</name>
    <dbReference type="NCBI Taxonomy" id="554290"/>
    <lineage>
        <taxon>Bacteria</taxon>
        <taxon>Pseudomonadati</taxon>
        <taxon>Pseudomonadota</taxon>
        <taxon>Gammaproteobacteria</taxon>
        <taxon>Enterobacterales</taxon>
        <taxon>Enterobacteriaceae</taxon>
        <taxon>Salmonella</taxon>
    </lineage>
</organism>
<reference key="1">
    <citation type="journal article" date="2009" name="BMC Genomics">
        <title>Pseudogene accumulation in the evolutionary histories of Salmonella enterica serovars Paratyphi A and Typhi.</title>
        <authorList>
            <person name="Holt K.E."/>
            <person name="Thomson N.R."/>
            <person name="Wain J."/>
            <person name="Langridge G.C."/>
            <person name="Hasan R."/>
            <person name="Bhutta Z.A."/>
            <person name="Quail M.A."/>
            <person name="Norbertczak H."/>
            <person name="Walker D."/>
            <person name="Simmonds M."/>
            <person name="White B."/>
            <person name="Bason N."/>
            <person name="Mungall K."/>
            <person name="Dougan G."/>
            <person name="Parkhill J."/>
        </authorList>
    </citation>
    <scope>NUCLEOTIDE SEQUENCE [LARGE SCALE GENOMIC DNA]</scope>
    <source>
        <strain>AKU_12601</strain>
    </source>
</reference>
<keyword id="KW-0030">Aminoacyl-tRNA synthetase</keyword>
<keyword id="KW-0067">ATP-binding</keyword>
<keyword id="KW-0963">Cytoplasm</keyword>
<keyword id="KW-0436">Ligase</keyword>
<keyword id="KW-0479">Metal-binding</keyword>
<keyword id="KW-0547">Nucleotide-binding</keyword>
<keyword id="KW-0648">Protein biosynthesis</keyword>
<keyword id="KW-0694">RNA-binding</keyword>
<keyword id="KW-0820">tRNA-binding</keyword>
<keyword id="KW-0862">Zinc</keyword>